<evidence type="ECO:0000255" key="1">
    <source>
        <dbReference type="HAMAP-Rule" id="MF_01168"/>
    </source>
</evidence>
<evidence type="ECO:0007829" key="2">
    <source>
        <dbReference type="PDB" id="1XG7"/>
    </source>
</evidence>
<gene>
    <name type="ordered locus">PF0904</name>
</gene>
<feature type="chain" id="PRO_0000185114" description="N-glycosylase/DNA lyase">
    <location>
        <begin position="1"/>
        <end position="242"/>
    </location>
</feature>
<feature type="region of interest" description="Helix-hairpin-helix">
    <location>
        <begin position="120"/>
        <end position="184"/>
    </location>
</feature>
<feature type="active site" description="Schiff-base intermediate with DNA" evidence="1">
    <location>
        <position position="144"/>
    </location>
</feature>
<feature type="active site" evidence="1">
    <location>
        <position position="176"/>
    </location>
</feature>
<feature type="binding site" evidence="1">
    <location>
        <position position="26"/>
    </location>
    <ligand>
        <name>8-oxoguanine</name>
        <dbReference type="ChEBI" id="CHEBI:52617"/>
    </ligand>
</feature>
<feature type="binding site" evidence="1">
    <location>
        <position position="53"/>
    </location>
    <ligand>
        <name>8-oxoguanine</name>
        <dbReference type="ChEBI" id="CHEBI:52617"/>
    </ligand>
</feature>
<feature type="binding site" evidence="1">
    <location>
        <position position="64"/>
    </location>
    <ligand>
        <name>8-oxoguanine</name>
        <dbReference type="ChEBI" id="CHEBI:52617"/>
    </ligand>
</feature>
<feature type="binding site" evidence="1">
    <location>
        <position position="148"/>
    </location>
    <ligand>
        <name>8-oxoguanine</name>
        <dbReference type="ChEBI" id="CHEBI:52617"/>
    </ligand>
</feature>
<feature type="binding site" evidence="1">
    <location>
        <position position="174"/>
    </location>
    <ligand>
        <name>8-oxoguanine</name>
        <dbReference type="ChEBI" id="CHEBI:52617"/>
    </ligand>
</feature>
<feature type="binding site" evidence="1">
    <location>
        <position position="210"/>
    </location>
    <ligand>
        <name>8-oxoguanine</name>
        <dbReference type="ChEBI" id="CHEBI:52617"/>
    </ligand>
</feature>
<feature type="binding site" evidence="1">
    <location>
        <position position="214"/>
    </location>
    <ligand>
        <name>8-oxoguanine</name>
        <dbReference type="ChEBI" id="CHEBI:52617"/>
    </ligand>
</feature>
<feature type="helix" evidence="2">
    <location>
        <begin position="2"/>
        <end position="22"/>
    </location>
</feature>
<feature type="helix" evidence="2">
    <location>
        <begin position="25"/>
        <end position="34"/>
    </location>
</feature>
<feature type="helix" evidence="2">
    <location>
        <begin position="39"/>
        <end position="51"/>
    </location>
</feature>
<feature type="helix" evidence="2">
    <location>
        <begin position="60"/>
        <end position="71"/>
    </location>
</feature>
<feature type="helix" evidence="2">
    <location>
        <begin position="79"/>
        <end position="86"/>
    </location>
</feature>
<feature type="turn" evidence="2">
    <location>
        <begin position="87"/>
        <end position="89"/>
    </location>
</feature>
<feature type="helix" evidence="2">
    <location>
        <begin position="97"/>
        <end position="112"/>
    </location>
</feature>
<feature type="helix" evidence="2">
    <location>
        <begin position="116"/>
        <end position="124"/>
    </location>
</feature>
<feature type="helix" evidence="2">
    <location>
        <begin position="126"/>
        <end position="137"/>
    </location>
</feature>
<feature type="helix" evidence="2">
    <location>
        <begin position="144"/>
        <end position="160"/>
    </location>
</feature>
<feature type="helix" evidence="2">
    <location>
        <begin position="177"/>
        <end position="184"/>
    </location>
</feature>
<feature type="helix" evidence="2">
    <location>
        <begin position="191"/>
        <end position="202"/>
    </location>
</feature>
<feature type="helix" evidence="2">
    <location>
        <begin position="206"/>
        <end position="217"/>
    </location>
</feature>
<feature type="helix" evidence="2">
    <location>
        <begin position="227"/>
        <end position="239"/>
    </location>
</feature>
<name>AGOG_PYRFU</name>
<proteinExistence type="evidence at protein level"/>
<keyword id="KW-0002">3D-structure</keyword>
<keyword id="KW-0227">DNA damage</keyword>
<keyword id="KW-0228">DNA excision</keyword>
<keyword id="KW-0234">DNA repair</keyword>
<keyword id="KW-0378">Hydrolase</keyword>
<keyword id="KW-0456">Lyase</keyword>
<keyword id="KW-1185">Reference proteome</keyword>
<organism>
    <name type="scientific">Pyrococcus furiosus (strain ATCC 43587 / DSM 3638 / JCM 8422 / Vc1)</name>
    <dbReference type="NCBI Taxonomy" id="186497"/>
    <lineage>
        <taxon>Archaea</taxon>
        <taxon>Methanobacteriati</taxon>
        <taxon>Methanobacteriota</taxon>
        <taxon>Thermococci</taxon>
        <taxon>Thermococcales</taxon>
        <taxon>Thermococcaceae</taxon>
        <taxon>Pyrococcus</taxon>
    </lineage>
</organism>
<protein>
    <recommendedName>
        <fullName evidence="1">N-glycosylase/DNA lyase</fullName>
    </recommendedName>
    <alternativeName>
        <fullName evidence="1">8-oxoguanine DNA glycosylase</fullName>
        <ecNumber evidence="1">3.2.2.-</ecNumber>
    </alternativeName>
    <alternativeName>
        <fullName evidence="1">AGOG</fullName>
    </alternativeName>
    <alternativeName>
        <fullName evidence="1">DNA-(apurinic or apyrimidinic site) lyase</fullName>
        <shortName evidence="1">AP lyase</shortName>
        <ecNumber evidence="1">4.2.99.18</ecNumber>
    </alternativeName>
</protein>
<comment type="function">
    <text evidence="1">DNA repair enzyme that is part of the base excision repair (BER) pathway; protects from oxidative damage by removing the major product of DNA oxidation, 8-oxoguanine (GO), from single- and double-stranded DNA substrates.</text>
</comment>
<comment type="catalytic activity">
    <reaction evidence="1">
        <text>2'-deoxyribonucleotide-(2'-deoxyribose 5'-phosphate)-2'-deoxyribonucleotide-DNA = a 3'-end 2'-deoxyribonucleotide-(2,3-dehydro-2,3-deoxyribose 5'-phosphate)-DNA + a 5'-end 5'-phospho-2'-deoxyribonucleoside-DNA + H(+)</text>
        <dbReference type="Rhea" id="RHEA:66592"/>
        <dbReference type="Rhea" id="RHEA-COMP:13180"/>
        <dbReference type="Rhea" id="RHEA-COMP:16897"/>
        <dbReference type="Rhea" id="RHEA-COMP:17067"/>
        <dbReference type="ChEBI" id="CHEBI:15378"/>
        <dbReference type="ChEBI" id="CHEBI:136412"/>
        <dbReference type="ChEBI" id="CHEBI:157695"/>
        <dbReference type="ChEBI" id="CHEBI:167181"/>
        <dbReference type="EC" id="4.2.99.18"/>
    </reaction>
</comment>
<comment type="domain">
    <text>Contains two alpha-helical subdomains, with the 8-oxoguanine binding site located in a cleft at their interface. Contains a helix-hairpin-helix (HhH) structural motif and a Gly/Pro-rich sequence followed by a conserved Asp (HhH-GPD motif).</text>
</comment>
<comment type="similarity">
    <text evidence="1">Belongs to the archaeal N-glycosylase/DNA lyase (AGOG) family.</text>
</comment>
<reference key="1">
    <citation type="journal article" date="1999" name="Genetics">
        <title>Divergence of the hyperthermophilic archaea Pyrococcus furiosus and P. horikoshii inferred from complete genomic sequences.</title>
        <authorList>
            <person name="Maeder D.L."/>
            <person name="Weiss R.B."/>
            <person name="Dunn D.M."/>
            <person name="Cherry J.L."/>
            <person name="Gonzalez J.M."/>
            <person name="DiRuggiero J."/>
            <person name="Robb F.T."/>
        </authorList>
    </citation>
    <scope>NUCLEOTIDE SEQUENCE [LARGE SCALE GENOMIC DNA]</scope>
    <source>
        <strain>ATCC 43587 / DSM 3638 / JCM 8422 / Vc1</strain>
    </source>
</reference>
<reference key="2">
    <citation type="submission" date="2004-09" db="PDB data bank">
        <title>Conserved hypothetical protein Pfu-877259-001 from Pyrococcus furiosus.</title>
        <authorList>
            <person name="Chang J."/>
            <person name="Zhao M."/>
            <person name="Horanyi P."/>
            <person name="Xu H."/>
            <person name="Yang H."/>
            <person name="Liu Z.-J."/>
            <person name="Chen L."/>
            <person name="Zhou W."/>
            <person name="Habel J."/>
            <person name="Tempel W."/>
            <person name="Lee D."/>
            <person name="Lin D."/>
            <person name="Chang S.-H."/>
            <person name="Eneh J.C."/>
            <person name="Hopkins R.C."/>
            <person name="Jenney F.E."/>
            <person name="Lee H.-S."/>
            <person name="Li T."/>
            <person name="Poole F.L."/>
            <person name="Shah C."/>
            <person name="Sugar F.J."/>
            <person name="Chen C.-Y."/>
            <person name="Arendall W.B."/>
            <person name="Richardson J.S."/>
            <person name="Richardson D.C."/>
            <person name="Rose J.P."/>
        </authorList>
    </citation>
    <scope>X-RAY CRYSTALLOGRAPHY (1.8 ANGSTROMS)</scope>
</reference>
<dbReference type="EC" id="3.2.2.-" evidence="1"/>
<dbReference type="EC" id="4.2.99.18" evidence="1"/>
<dbReference type="EMBL" id="AE009950">
    <property type="protein sequence ID" value="AAL81028.1"/>
    <property type="molecule type" value="Genomic_DNA"/>
</dbReference>
<dbReference type="RefSeq" id="WP_014835272.1">
    <property type="nucleotide sequence ID" value="NZ_CP023154.1"/>
</dbReference>
<dbReference type="PDB" id="1XG7">
    <property type="method" value="X-ray"/>
    <property type="resolution" value="1.88 A"/>
    <property type="chains" value="A/B=2-242"/>
</dbReference>
<dbReference type="PDB" id="4PII">
    <property type="method" value="X-ray"/>
    <property type="resolution" value="2.17 A"/>
    <property type="chains" value="A=2-242"/>
</dbReference>
<dbReference type="PDBsum" id="1XG7"/>
<dbReference type="PDBsum" id="4PII"/>
<dbReference type="SMR" id="Q8U2D5"/>
<dbReference type="STRING" id="186497.PF0904"/>
<dbReference type="PaxDb" id="186497-PF0904"/>
<dbReference type="KEGG" id="pfu:PF0904"/>
<dbReference type="PATRIC" id="fig|186497.12.peg.959"/>
<dbReference type="eggNOG" id="arCOG04144">
    <property type="taxonomic scope" value="Archaea"/>
</dbReference>
<dbReference type="HOGENOM" id="CLU_085935_0_0_2"/>
<dbReference type="OrthoDB" id="15106at2157"/>
<dbReference type="PhylomeDB" id="Q8U2D5"/>
<dbReference type="EvolutionaryTrace" id="Q8U2D5"/>
<dbReference type="Proteomes" id="UP000001013">
    <property type="component" value="Chromosome"/>
</dbReference>
<dbReference type="GO" id="GO:0140078">
    <property type="term" value="F:class I DNA-(apurinic or apyrimidinic site) endonuclease activity"/>
    <property type="evidence" value="ECO:0007669"/>
    <property type="project" value="UniProtKB-EC"/>
</dbReference>
<dbReference type="GO" id="GO:0000702">
    <property type="term" value="F:oxidized base lesion DNA N-glycosylase activity"/>
    <property type="evidence" value="ECO:0007669"/>
    <property type="project" value="UniProtKB-UniRule"/>
</dbReference>
<dbReference type="GO" id="GO:0006284">
    <property type="term" value="P:base-excision repair"/>
    <property type="evidence" value="ECO:0007669"/>
    <property type="project" value="UniProtKB-UniRule"/>
</dbReference>
<dbReference type="Gene3D" id="1.10.340.30">
    <property type="entry name" value="Hypothetical protein, domain 2"/>
    <property type="match status" value="1"/>
</dbReference>
<dbReference type="HAMAP" id="MF_01168">
    <property type="entry name" value="AGOG"/>
    <property type="match status" value="1"/>
</dbReference>
<dbReference type="InterPro" id="IPR016544">
    <property type="entry name" value="AGOG"/>
</dbReference>
<dbReference type="InterPro" id="IPR015254">
    <property type="entry name" value="AGOG-like"/>
</dbReference>
<dbReference type="InterPro" id="IPR011257">
    <property type="entry name" value="DNA_glycosylase"/>
</dbReference>
<dbReference type="NCBIfam" id="NF009785">
    <property type="entry name" value="PRK13280.1-2"/>
    <property type="match status" value="1"/>
</dbReference>
<dbReference type="Pfam" id="PF09171">
    <property type="entry name" value="AGOG"/>
    <property type="match status" value="1"/>
</dbReference>
<dbReference type="PIRSF" id="PIRSF008955">
    <property type="entry name" value="AGOG"/>
    <property type="match status" value="1"/>
</dbReference>
<dbReference type="SUPFAM" id="SSF48150">
    <property type="entry name" value="DNA-glycosylase"/>
    <property type="match status" value="1"/>
</dbReference>
<sequence>MRELVEIIKGIGIEGAKEVEEKVDRQFYALQYLFRHQDPEMFIKLVIANSLVSYQLTGRGEDWWWEFARYFSGREVDSIWKAYGEFLPKSKNNRRLIEAKLNRIRKVEGFLSTLTLKDLEGYYKNMKMLWKALIKIMGSREDSKTIVFTVKMFGYASRIAFSRFIPYPMEIPIPEDLRIKSVTSKLTQEKPTKFWMKIGQESGVPPLHIDSLIWPLLGNADLTPLDIELRNKLMKLTELLGL</sequence>
<accession>Q8U2D5</accession>